<gene>
    <name type="primary">chit1</name>
    <name type="ORF">MAA_02685</name>
</gene>
<proteinExistence type="inferred from homology"/>
<accession>E9ERT9</accession>
<reference key="1">
    <citation type="journal article" date="2011" name="PLoS Genet.">
        <title>Genome sequencing and comparative transcriptomics of the model entomopathogenic fungi Metarhizium anisopliae and M. acridum.</title>
        <authorList>
            <person name="Gao Q."/>
            <person name="Jin K."/>
            <person name="Ying S.-H."/>
            <person name="Zhang Y."/>
            <person name="Xiao G."/>
            <person name="Shang Y."/>
            <person name="Duan Z."/>
            <person name="Hu X."/>
            <person name="Xie X.-Q."/>
            <person name="Zhou G."/>
            <person name="Peng G."/>
            <person name="Luo Z."/>
            <person name="Huang W."/>
            <person name="Wang B."/>
            <person name="Fang W."/>
            <person name="Wang S."/>
            <person name="Zhong Y."/>
            <person name="Ma L.-J."/>
            <person name="St Leger R.J."/>
            <person name="Zhao G.-P."/>
            <person name="Pei Y."/>
            <person name="Feng M.-G."/>
            <person name="Xia Y."/>
            <person name="Wang C."/>
        </authorList>
    </citation>
    <scope>NUCLEOTIDE SEQUENCE [LARGE SCALE GENOMIC DNA]</scope>
    <source>
        <strain>ARSEF 23 / ATCC MYA-3075</strain>
    </source>
</reference>
<reference key="2">
    <citation type="journal article" date="2014" name="Proc. Natl. Acad. Sci. U.S.A.">
        <title>Trajectory and genomic determinants of fungal-pathogen speciation and host adaptation.</title>
        <authorList>
            <person name="Hu X."/>
            <person name="Xiao G."/>
            <person name="Zheng P."/>
            <person name="Shang Y."/>
            <person name="Su Y."/>
            <person name="Zhang X."/>
            <person name="Liu X."/>
            <person name="Zhan S."/>
            <person name="St Leger R.J."/>
            <person name="Wang C."/>
        </authorList>
    </citation>
    <scope>GENOME REANNOTATION</scope>
    <source>
        <strain>ARSEF 23 / ATCC MYA-3075</strain>
    </source>
</reference>
<organism>
    <name type="scientific">Metarhizium robertsii (strain ARSEF 23 / ATCC MYA-3075)</name>
    <name type="common">Metarhizium anisopliae (strain ARSEF 23)</name>
    <dbReference type="NCBI Taxonomy" id="655844"/>
    <lineage>
        <taxon>Eukaryota</taxon>
        <taxon>Fungi</taxon>
        <taxon>Dikarya</taxon>
        <taxon>Ascomycota</taxon>
        <taxon>Pezizomycotina</taxon>
        <taxon>Sordariomycetes</taxon>
        <taxon>Hypocreomycetidae</taxon>
        <taxon>Hypocreales</taxon>
        <taxon>Clavicipitaceae</taxon>
        <taxon>Metarhizium</taxon>
    </lineage>
</organism>
<dbReference type="EC" id="3.2.1.14"/>
<dbReference type="EMBL" id="ADNJ02000004">
    <property type="protein sequence ID" value="EFZ01456.1"/>
    <property type="molecule type" value="Genomic_DNA"/>
</dbReference>
<dbReference type="RefSeq" id="XP_007818874.1">
    <property type="nucleotide sequence ID" value="XM_007820683.1"/>
</dbReference>
<dbReference type="SMR" id="E9ERT9"/>
<dbReference type="CAZy" id="GH18">
    <property type="family name" value="Glycoside Hydrolase Family 18"/>
</dbReference>
<dbReference type="GlyCosmos" id="E9ERT9">
    <property type="glycosylation" value="5 sites, No reported glycans"/>
</dbReference>
<dbReference type="GeneID" id="19256971"/>
<dbReference type="KEGG" id="maj:MAA_02685"/>
<dbReference type="HOGENOM" id="CLU_002833_1_0_1"/>
<dbReference type="OrthoDB" id="76388at2759"/>
<dbReference type="Proteomes" id="UP000002498">
    <property type="component" value="Unassembled WGS sequence"/>
</dbReference>
<dbReference type="GO" id="GO:0005576">
    <property type="term" value="C:extracellular region"/>
    <property type="evidence" value="ECO:0007669"/>
    <property type="project" value="UniProtKB-SubCell"/>
</dbReference>
<dbReference type="GO" id="GO:0008061">
    <property type="term" value="F:chitin binding"/>
    <property type="evidence" value="ECO:0007669"/>
    <property type="project" value="UniProtKB-KW"/>
</dbReference>
<dbReference type="GO" id="GO:0008843">
    <property type="term" value="F:endochitinase activity"/>
    <property type="evidence" value="ECO:0007669"/>
    <property type="project" value="UniProtKB-EC"/>
</dbReference>
<dbReference type="GO" id="GO:0006032">
    <property type="term" value="P:chitin catabolic process"/>
    <property type="evidence" value="ECO:0007669"/>
    <property type="project" value="UniProtKB-KW"/>
</dbReference>
<dbReference type="GO" id="GO:0000272">
    <property type="term" value="P:polysaccharide catabolic process"/>
    <property type="evidence" value="ECO:0007669"/>
    <property type="project" value="UniProtKB-KW"/>
</dbReference>
<dbReference type="CDD" id="cd06548">
    <property type="entry name" value="GH18_chitinase"/>
    <property type="match status" value="1"/>
</dbReference>
<dbReference type="FunFam" id="3.10.50.10:FF:000005">
    <property type="entry name" value="Endochitinase B1"/>
    <property type="match status" value="1"/>
</dbReference>
<dbReference type="FunFam" id="3.20.20.80:FF:000075">
    <property type="entry name" value="Sporulation-specific chitinase"/>
    <property type="match status" value="1"/>
</dbReference>
<dbReference type="Gene3D" id="3.10.50.10">
    <property type="match status" value="1"/>
</dbReference>
<dbReference type="Gene3D" id="3.20.20.80">
    <property type="entry name" value="Glycosidases"/>
    <property type="match status" value="1"/>
</dbReference>
<dbReference type="InterPro" id="IPR011583">
    <property type="entry name" value="Chitinase_II/V-like_cat"/>
</dbReference>
<dbReference type="InterPro" id="IPR029070">
    <property type="entry name" value="Chitinase_insertion_sf"/>
</dbReference>
<dbReference type="InterPro" id="IPR001223">
    <property type="entry name" value="Glyco_hydro18_cat"/>
</dbReference>
<dbReference type="InterPro" id="IPR001579">
    <property type="entry name" value="Glyco_hydro_18_chit_AS"/>
</dbReference>
<dbReference type="InterPro" id="IPR017853">
    <property type="entry name" value="Glycoside_hydrolase_SF"/>
</dbReference>
<dbReference type="InterPro" id="IPR050314">
    <property type="entry name" value="Glycosyl_Hydrlase_18"/>
</dbReference>
<dbReference type="PANTHER" id="PTHR11177">
    <property type="entry name" value="CHITINASE"/>
    <property type="match status" value="1"/>
</dbReference>
<dbReference type="PANTHER" id="PTHR11177:SF365">
    <property type="entry name" value="ENDOCHITINASE B"/>
    <property type="match status" value="1"/>
</dbReference>
<dbReference type="Pfam" id="PF00704">
    <property type="entry name" value="Glyco_hydro_18"/>
    <property type="match status" value="1"/>
</dbReference>
<dbReference type="SMART" id="SM00636">
    <property type="entry name" value="Glyco_18"/>
    <property type="match status" value="1"/>
</dbReference>
<dbReference type="SUPFAM" id="SSF51445">
    <property type="entry name" value="(Trans)glycosidases"/>
    <property type="match status" value="1"/>
</dbReference>
<dbReference type="SUPFAM" id="SSF54556">
    <property type="entry name" value="Chitinase insertion domain"/>
    <property type="match status" value="1"/>
</dbReference>
<dbReference type="PROSITE" id="PS01095">
    <property type="entry name" value="GH18_1"/>
    <property type="match status" value="1"/>
</dbReference>
<dbReference type="PROSITE" id="PS51910">
    <property type="entry name" value="GH18_2"/>
    <property type="match status" value="1"/>
</dbReference>
<comment type="function">
    <text evidence="1">Secreted chitinase involved in the degradation of chitin, a component of the cell walls of fungi and exoskeletal elements of some animals (including worms and arthropods). Participates in the infection process and directly acts in the penetration process of the host cuticle (By similarity).</text>
</comment>
<comment type="catalytic activity">
    <reaction>
        <text>Random endo-hydrolysis of N-acetyl-beta-D-glucosaminide (1-&gt;4)-beta-linkages in chitin and chitodextrins.</text>
        <dbReference type="EC" id="3.2.1.14"/>
    </reaction>
</comment>
<comment type="subcellular location">
    <subcellularLocation>
        <location evidence="1">Secreted</location>
    </subcellularLocation>
</comment>
<comment type="similarity">
    <text evidence="5">Belongs to the glycosyl hydrolase 18 family. Chitinase class V subfamily.</text>
</comment>
<name>CHI1_METRA</name>
<keyword id="KW-0119">Carbohydrate metabolism</keyword>
<keyword id="KW-0146">Chitin degradation</keyword>
<keyword id="KW-0147">Chitin-binding</keyword>
<keyword id="KW-0325">Glycoprotein</keyword>
<keyword id="KW-0326">Glycosidase</keyword>
<keyword id="KW-0378">Hydrolase</keyword>
<keyword id="KW-0624">Polysaccharide degradation</keyword>
<keyword id="KW-0964">Secreted</keyword>
<keyword id="KW-0732">Signal</keyword>
<keyword id="KW-0843">Virulence</keyword>
<protein>
    <recommendedName>
        <fullName>Endochitinase 1</fullName>
        <ecNumber>3.2.1.14</ecNumber>
    </recommendedName>
    <alternativeName>
        <fullName>Chitinase 1</fullName>
    </alternativeName>
</protein>
<sequence>MPSLFAQSLAIIATLQATLGLATPVSAPDTVTGKHAGGYVNAVYFTNWGIYGRNYQPADLPASQISHVLYSFLNLSNNGTVYSGDSWADIDKHYPNDSWNDVGNNVYGCVKQLYLLKKANRNMKTMLSIGGWTWSTNFPAAASTAATRSNFAKSAVTIMKDWGFDGIDVDWEYPADDAQAANMVLLLQAVRDELDAYAAKFAQGYHFQLSIAAPAGPANYNKLHLGDLGKVLDYINLMAYDFSGSWSNSSAHNANLYANPGNLNATPFNTDDAVNDYIKGGVPASKIVLGMPIYGKSFQKTNGIGKPFSGVGDGSWENGIWDYKVLPKAGATVIYDDVAKGYYSYDNRTQELISYDTPDITKEKVTYLKSKGLGGSMFWEASADRQGPDSLIGTSSNKLGGPDTTENLLNYPDSKYDNMRKQMA</sequence>
<evidence type="ECO:0000250" key="1"/>
<evidence type="ECO:0000255" key="2"/>
<evidence type="ECO:0000255" key="3">
    <source>
        <dbReference type="PROSITE-ProRule" id="PRU01258"/>
    </source>
</evidence>
<evidence type="ECO:0000256" key="4">
    <source>
        <dbReference type="SAM" id="MobiDB-lite"/>
    </source>
</evidence>
<evidence type="ECO:0000305" key="5"/>
<feature type="signal peptide" evidence="2">
    <location>
        <begin position="1"/>
        <end position="22"/>
    </location>
</feature>
<feature type="chain" id="PRO_0000429865" description="Endochitinase 1">
    <location>
        <begin position="23"/>
        <end position="424"/>
    </location>
</feature>
<feature type="domain" description="GH18" evidence="3">
    <location>
        <begin position="39"/>
        <end position="402"/>
    </location>
</feature>
<feature type="region of interest" description="Disordered" evidence="4">
    <location>
        <begin position="385"/>
        <end position="412"/>
    </location>
</feature>
<feature type="compositionally biased region" description="Polar residues" evidence="4">
    <location>
        <begin position="392"/>
        <end position="408"/>
    </location>
</feature>
<feature type="active site" description="Proton donor" evidence="3">
    <location>
        <position position="172"/>
    </location>
</feature>
<feature type="binding site" evidence="3">
    <location>
        <begin position="103"/>
        <end position="104"/>
    </location>
    <ligand>
        <name>chitin</name>
        <dbReference type="ChEBI" id="CHEBI:17029"/>
    </ligand>
</feature>
<feature type="binding site" evidence="3">
    <location>
        <begin position="130"/>
        <end position="133"/>
    </location>
    <ligand>
        <name>chitin</name>
        <dbReference type="ChEBI" id="CHEBI:17029"/>
    </ligand>
</feature>
<feature type="binding site" evidence="3">
    <location>
        <position position="173"/>
    </location>
    <ligand>
        <name>chitin</name>
        <dbReference type="ChEBI" id="CHEBI:17029"/>
    </ligand>
</feature>
<feature type="binding site" evidence="3">
    <location>
        <begin position="238"/>
        <end position="241"/>
    </location>
    <ligand>
        <name>chitin</name>
        <dbReference type="ChEBI" id="CHEBI:17029"/>
    </ligand>
</feature>
<feature type="binding site" evidence="3">
    <location>
        <position position="379"/>
    </location>
    <ligand>
        <name>chitin</name>
        <dbReference type="ChEBI" id="CHEBI:17029"/>
    </ligand>
</feature>
<feature type="glycosylation site" description="N-linked (GlcNAc...) asparagine" evidence="2">
    <location>
        <position position="74"/>
    </location>
</feature>
<feature type="glycosylation site" description="N-linked (GlcNAc...) asparagine" evidence="2">
    <location>
        <position position="78"/>
    </location>
</feature>
<feature type="glycosylation site" description="N-linked (GlcNAc...) asparagine" evidence="2">
    <location>
        <position position="96"/>
    </location>
</feature>
<feature type="glycosylation site" description="N-linked (GlcNAc...) asparagine" evidence="2">
    <location>
        <position position="248"/>
    </location>
</feature>
<feature type="glycosylation site" description="N-linked (GlcNAc...) asparagine" evidence="2">
    <location>
        <position position="347"/>
    </location>
</feature>